<gene>
    <name evidence="1" type="primary">ycf3</name>
</gene>
<reference key="1">
    <citation type="journal article" date="2006" name="Mol. Genet. Genomics">
        <title>The chloroplast genome of Nicotiana sylvestris and Nicotiana tomentosiformis: complete sequencing confirms that the Nicotiana sylvestris progenitor is the maternal genome donor of Nicotiana tabacum.</title>
        <authorList>
            <person name="Yukawa M."/>
            <person name="Tsudzuki T."/>
            <person name="Sugiura M."/>
        </authorList>
    </citation>
    <scope>NUCLEOTIDE SEQUENCE [LARGE SCALE GENOMIC DNA]</scope>
</reference>
<keyword id="KW-0150">Chloroplast</keyword>
<keyword id="KW-0472">Membrane</keyword>
<keyword id="KW-0602">Photosynthesis</keyword>
<keyword id="KW-0934">Plastid</keyword>
<keyword id="KW-1185">Reference proteome</keyword>
<keyword id="KW-0677">Repeat</keyword>
<keyword id="KW-0793">Thylakoid</keyword>
<keyword id="KW-0802">TPR repeat</keyword>
<feature type="chain" id="PRO_0000275626" description="Photosystem I assembly protein Ycf3">
    <location>
        <begin position="1"/>
        <end position="168"/>
    </location>
</feature>
<feature type="repeat" description="TPR 1">
    <location>
        <begin position="35"/>
        <end position="68"/>
    </location>
</feature>
<feature type="repeat" description="TPR 2">
    <location>
        <begin position="72"/>
        <end position="105"/>
    </location>
</feature>
<feature type="repeat" description="TPR 3">
    <location>
        <begin position="120"/>
        <end position="153"/>
    </location>
</feature>
<organism>
    <name type="scientific">Nicotiana sylvestris</name>
    <name type="common">Wood tobacco</name>
    <name type="synonym">South American tobacco</name>
    <dbReference type="NCBI Taxonomy" id="4096"/>
    <lineage>
        <taxon>Eukaryota</taxon>
        <taxon>Viridiplantae</taxon>
        <taxon>Streptophyta</taxon>
        <taxon>Embryophyta</taxon>
        <taxon>Tracheophyta</taxon>
        <taxon>Spermatophyta</taxon>
        <taxon>Magnoliopsida</taxon>
        <taxon>eudicotyledons</taxon>
        <taxon>Gunneridae</taxon>
        <taxon>Pentapetalae</taxon>
        <taxon>asterids</taxon>
        <taxon>lamiids</taxon>
        <taxon>Solanales</taxon>
        <taxon>Solanaceae</taxon>
        <taxon>Nicotianoideae</taxon>
        <taxon>Nicotianeae</taxon>
        <taxon>Nicotiana</taxon>
    </lineage>
</organism>
<comment type="function">
    <text evidence="1">Essential for the assembly of the photosystem I (PSI) complex. May act as a chaperone-like factor to guide the assembly of the PSI subunits.</text>
</comment>
<comment type="subcellular location">
    <subcellularLocation>
        <location evidence="1">Plastid</location>
        <location evidence="1">Chloroplast thylakoid membrane</location>
        <topology evidence="1">Peripheral membrane protein</topology>
    </subcellularLocation>
</comment>
<comment type="similarity">
    <text evidence="1">Belongs to the Ycf3 family.</text>
</comment>
<protein>
    <recommendedName>
        <fullName evidence="1">Photosystem I assembly protein Ycf3</fullName>
    </recommendedName>
</protein>
<sequence>MPRSRINGNFIDKTFSIVANILLRVIPTTSGEKEAFTYYRDGMSAQSEGNYAEALQNYYEAMRLEIDPYDRSYILYNIGLIHTSNGEHTKALEYYFRALERNPFLPQAFNNMAVICHYRGEQAIQQGDSEIAEAWFDQAAEYWKQAIALTPGNYIEAHNWLKITRRFE</sequence>
<evidence type="ECO:0000255" key="1">
    <source>
        <dbReference type="HAMAP-Rule" id="MF_00439"/>
    </source>
</evidence>
<dbReference type="EMBL" id="AB237912">
    <property type="protein sequence ID" value="BAE46650.1"/>
    <property type="molecule type" value="Genomic_DNA"/>
</dbReference>
<dbReference type="RefSeq" id="YP_358675.1">
    <property type="nucleotide sequence ID" value="NC_007500.1"/>
</dbReference>
<dbReference type="SMR" id="Q3C1H7"/>
<dbReference type="GeneID" id="3735128"/>
<dbReference type="KEGG" id="nsy:3735128"/>
<dbReference type="OrthoDB" id="17380at4085"/>
<dbReference type="Proteomes" id="UP000189701">
    <property type="component" value="Chloroplast Pltd"/>
</dbReference>
<dbReference type="GO" id="GO:0009535">
    <property type="term" value="C:chloroplast thylakoid membrane"/>
    <property type="evidence" value="ECO:0007669"/>
    <property type="project" value="UniProtKB-SubCell"/>
</dbReference>
<dbReference type="GO" id="GO:0015979">
    <property type="term" value="P:photosynthesis"/>
    <property type="evidence" value="ECO:0007669"/>
    <property type="project" value="UniProtKB-UniRule"/>
</dbReference>
<dbReference type="FunFam" id="1.25.40.10:FF:000004">
    <property type="entry name" value="Photosystem I assembly protein Ycf3"/>
    <property type="match status" value="1"/>
</dbReference>
<dbReference type="Gene3D" id="1.25.40.10">
    <property type="entry name" value="Tetratricopeptide repeat domain"/>
    <property type="match status" value="1"/>
</dbReference>
<dbReference type="HAMAP" id="MF_00439">
    <property type="entry name" value="Ycf3"/>
    <property type="match status" value="1"/>
</dbReference>
<dbReference type="InterPro" id="IPR022818">
    <property type="entry name" value="PSI_Ycf3_assembly"/>
</dbReference>
<dbReference type="InterPro" id="IPR011990">
    <property type="entry name" value="TPR-like_helical_dom_sf"/>
</dbReference>
<dbReference type="InterPro" id="IPR019734">
    <property type="entry name" value="TPR_rpt"/>
</dbReference>
<dbReference type="InterPro" id="IPR051685">
    <property type="entry name" value="Ycf3/AcsC/BcsC/TPR_MFPF"/>
</dbReference>
<dbReference type="NCBIfam" id="NF002725">
    <property type="entry name" value="PRK02603.1"/>
    <property type="match status" value="1"/>
</dbReference>
<dbReference type="PANTHER" id="PTHR44943">
    <property type="entry name" value="CELLULOSE SYNTHASE OPERON PROTEIN C"/>
    <property type="match status" value="1"/>
</dbReference>
<dbReference type="PANTHER" id="PTHR44943:SF8">
    <property type="entry name" value="TPR REPEAT-CONTAINING PROTEIN MJ0263"/>
    <property type="match status" value="1"/>
</dbReference>
<dbReference type="Pfam" id="PF00515">
    <property type="entry name" value="TPR_1"/>
    <property type="match status" value="1"/>
</dbReference>
<dbReference type="SMART" id="SM00028">
    <property type="entry name" value="TPR"/>
    <property type="match status" value="3"/>
</dbReference>
<dbReference type="SUPFAM" id="SSF48452">
    <property type="entry name" value="TPR-like"/>
    <property type="match status" value="1"/>
</dbReference>
<dbReference type="PROSITE" id="PS50005">
    <property type="entry name" value="TPR"/>
    <property type="match status" value="3"/>
</dbReference>
<dbReference type="PROSITE" id="PS50293">
    <property type="entry name" value="TPR_REGION"/>
    <property type="match status" value="2"/>
</dbReference>
<geneLocation type="chloroplast"/>
<accession>Q3C1H7</accession>
<name>YCF3_NICSY</name>
<proteinExistence type="inferred from homology"/>